<sequence>MTQEILGEVQTGKIPLKGRTLKELSEIMVSLGEKSFRAKQIYHGLYVNRYESWEQFTTFSKTLKEKLEGLCSLTQLTVVKHLKSVDGTQKFTFASEQGKEFEAVWIPSGDGGRKTICISSQVGCTLNCKFCATAKLEFQGNLKAHEIVDQVLQVEKIVGDNATNVVFMGMGEPFHNYFNVIRAASILHDPDALNLGAKRITISTSGVVNGIRRFIENKEPYNFAISLNHPDPNGRLQIMDIEEKFALSELLQAAKDFTRELKRRITFEYVMIPGVSMGPENANKLVKIARSLDCKINVIPLNTEFFGWRRPTKQEVAEFITLLEPAGVPILNRRSPGKDIFGACGMLASKS</sequence>
<proteinExistence type="inferred from homology"/>
<gene>
    <name evidence="1" type="primary">rlmN</name>
    <name type="ordered locus">LBJ_0794</name>
</gene>
<evidence type="ECO:0000255" key="1">
    <source>
        <dbReference type="HAMAP-Rule" id="MF_01849"/>
    </source>
</evidence>
<evidence type="ECO:0000255" key="2">
    <source>
        <dbReference type="PROSITE-ProRule" id="PRU01266"/>
    </source>
</evidence>
<keyword id="KW-0004">4Fe-4S</keyword>
<keyword id="KW-0963">Cytoplasm</keyword>
<keyword id="KW-1015">Disulfide bond</keyword>
<keyword id="KW-0408">Iron</keyword>
<keyword id="KW-0411">Iron-sulfur</keyword>
<keyword id="KW-0479">Metal-binding</keyword>
<keyword id="KW-0489">Methyltransferase</keyword>
<keyword id="KW-0698">rRNA processing</keyword>
<keyword id="KW-0949">S-adenosyl-L-methionine</keyword>
<keyword id="KW-0808">Transferase</keyword>
<keyword id="KW-0819">tRNA processing</keyword>
<comment type="function">
    <text evidence="1">Specifically methylates position 2 of adenine 2503 in 23S rRNA and position 2 of adenine 37 in tRNAs.</text>
</comment>
<comment type="catalytic activity">
    <reaction evidence="1">
        <text>adenosine(2503) in 23S rRNA + 2 reduced [2Fe-2S]-[ferredoxin] + 2 S-adenosyl-L-methionine = 2-methyladenosine(2503) in 23S rRNA + 5'-deoxyadenosine + L-methionine + 2 oxidized [2Fe-2S]-[ferredoxin] + S-adenosyl-L-homocysteine</text>
        <dbReference type="Rhea" id="RHEA:42916"/>
        <dbReference type="Rhea" id="RHEA-COMP:10000"/>
        <dbReference type="Rhea" id="RHEA-COMP:10001"/>
        <dbReference type="Rhea" id="RHEA-COMP:10152"/>
        <dbReference type="Rhea" id="RHEA-COMP:10282"/>
        <dbReference type="ChEBI" id="CHEBI:17319"/>
        <dbReference type="ChEBI" id="CHEBI:33737"/>
        <dbReference type="ChEBI" id="CHEBI:33738"/>
        <dbReference type="ChEBI" id="CHEBI:57844"/>
        <dbReference type="ChEBI" id="CHEBI:57856"/>
        <dbReference type="ChEBI" id="CHEBI:59789"/>
        <dbReference type="ChEBI" id="CHEBI:74411"/>
        <dbReference type="ChEBI" id="CHEBI:74497"/>
        <dbReference type="EC" id="2.1.1.192"/>
    </reaction>
</comment>
<comment type="catalytic activity">
    <reaction evidence="1">
        <text>adenosine(37) in tRNA + 2 reduced [2Fe-2S]-[ferredoxin] + 2 S-adenosyl-L-methionine = 2-methyladenosine(37) in tRNA + 5'-deoxyadenosine + L-methionine + 2 oxidized [2Fe-2S]-[ferredoxin] + S-adenosyl-L-homocysteine</text>
        <dbReference type="Rhea" id="RHEA:43332"/>
        <dbReference type="Rhea" id="RHEA-COMP:10000"/>
        <dbReference type="Rhea" id="RHEA-COMP:10001"/>
        <dbReference type="Rhea" id="RHEA-COMP:10162"/>
        <dbReference type="Rhea" id="RHEA-COMP:10485"/>
        <dbReference type="ChEBI" id="CHEBI:17319"/>
        <dbReference type="ChEBI" id="CHEBI:33737"/>
        <dbReference type="ChEBI" id="CHEBI:33738"/>
        <dbReference type="ChEBI" id="CHEBI:57844"/>
        <dbReference type="ChEBI" id="CHEBI:57856"/>
        <dbReference type="ChEBI" id="CHEBI:59789"/>
        <dbReference type="ChEBI" id="CHEBI:74411"/>
        <dbReference type="ChEBI" id="CHEBI:74497"/>
        <dbReference type="EC" id="2.1.1.192"/>
    </reaction>
</comment>
<comment type="cofactor">
    <cofactor evidence="1">
        <name>[4Fe-4S] cluster</name>
        <dbReference type="ChEBI" id="CHEBI:49883"/>
    </cofactor>
    <text evidence="1">Binds 1 [4Fe-4S] cluster. The cluster is coordinated with 3 cysteines and an exchangeable S-adenosyl-L-methionine.</text>
</comment>
<comment type="subcellular location">
    <subcellularLocation>
        <location evidence="1">Cytoplasm</location>
    </subcellularLocation>
</comment>
<comment type="miscellaneous">
    <text evidence="1">Reaction proceeds by a ping-pong mechanism involving intermediate methylation of a conserved cysteine residue.</text>
</comment>
<comment type="similarity">
    <text evidence="1">Belongs to the radical SAM superfamily. RlmN family.</text>
</comment>
<name>RLMN_LEPBJ</name>
<reference key="1">
    <citation type="journal article" date="2006" name="Proc. Natl. Acad. Sci. U.S.A.">
        <title>Genome reduction in Leptospira borgpetersenii reflects limited transmission potential.</title>
        <authorList>
            <person name="Bulach D.M."/>
            <person name="Zuerner R.L."/>
            <person name="Wilson P."/>
            <person name="Seemann T."/>
            <person name="McGrath A."/>
            <person name="Cullen P.A."/>
            <person name="Davis J."/>
            <person name="Johnson M."/>
            <person name="Kuczek E."/>
            <person name="Alt D.P."/>
            <person name="Peterson-Burch B."/>
            <person name="Coppel R.L."/>
            <person name="Rood J.I."/>
            <person name="Davies J.K."/>
            <person name="Adler B."/>
        </authorList>
    </citation>
    <scope>NUCLEOTIDE SEQUENCE [LARGE SCALE GENOMIC DNA]</scope>
    <source>
        <strain>JB197</strain>
    </source>
</reference>
<dbReference type="EC" id="2.1.1.192" evidence="1"/>
<dbReference type="EMBL" id="CP000350">
    <property type="protein sequence ID" value="ABJ75459.1"/>
    <property type="molecule type" value="Genomic_DNA"/>
</dbReference>
<dbReference type="RefSeq" id="WP_011670691.1">
    <property type="nucleotide sequence ID" value="NC_008510.1"/>
</dbReference>
<dbReference type="SMR" id="Q04UG1"/>
<dbReference type="KEGG" id="lbj:LBJ_0794"/>
<dbReference type="HOGENOM" id="CLU_029101_2_0_12"/>
<dbReference type="Proteomes" id="UP000000656">
    <property type="component" value="Chromosome 1"/>
</dbReference>
<dbReference type="GO" id="GO:0005737">
    <property type="term" value="C:cytoplasm"/>
    <property type="evidence" value="ECO:0007669"/>
    <property type="project" value="UniProtKB-SubCell"/>
</dbReference>
<dbReference type="GO" id="GO:0051539">
    <property type="term" value="F:4 iron, 4 sulfur cluster binding"/>
    <property type="evidence" value="ECO:0007669"/>
    <property type="project" value="UniProtKB-UniRule"/>
</dbReference>
<dbReference type="GO" id="GO:0046872">
    <property type="term" value="F:metal ion binding"/>
    <property type="evidence" value="ECO:0007669"/>
    <property type="project" value="UniProtKB-KW"/>
</dbReference>
<dbReference type="GO" id="GO:0070040">
    <property type="term" value="F:rRNA (adenine(2503)-C2-)-methyltransferase activity"/>
    <property type="evidence" value="ECO:0007669"/>
    <property type="project" value="UniProtKB-UniRule"/>
</dbReference>
<dbReference type="GO" id="GO:0019843">
    <property type="term" value="F:rRNA binding"/>
    <property type="evidence" value="ECO:0007669"/>
    <property type="project" value="UniProtKB-UniRule"/>
</dbReference>
<dbReference type="GO" id="GO:0002935">
    <property type="term" value="F:tRNA (adenine(37)-C2)-methyltransferase activity"/>
    <property type="evidence" value="ECO:0007669"/>
    <property type="project" value="UniProtKB-UniRule"/>
</dbReference>
<dbReference type="GO" id="GO:0000049">
    <property type="term" value="F:tRNA binding"/>
    <property type="evidence" value="ECO:0007669"/>
    <property type="project" value="UniProtKB-UniRule"/>
</dbReference>
<dbReference type="GO" id="GO:0070475">
    <property type="term" value="P:rRNA base methylation"/>
    <property type="evidence" value="ECO:0007669"/>
    <property type="project" value="UniProtKB-UniRule"/>
</dbReference>
<dbReference type="GO" id="GO:0030488">
    <property type="term" value="P:tRNA methylation"/>
    <property type="evidence" value="ECO:0007669"/>
    <property type="project" value="UniProtKB-UniRule"/>
</dbReference>
<dbReference type="CDD" id="cd01335">
    <property type="entry name" value="Radical_SAM"/>
    <property type="match status" value="1"/>
</dbReference>
<dbReference type="FunFam" id="3.20.20.70:FF:000014">
    <property type="entry name" value="Probable dual-specificity RNA methyltransferase RlmN"/>
    <property type="match status" value="1"/>
</dbReference>
<dbReference type="Gene3D" id="1.10.150.530">
    <property type="match status" value="1"/>
</dbReference>
<dbReference type="Gene3D" id="3.20.20.70">
    <property type="entry name" value="Aldolase class I"/>
    <property type="match status" value="1"/>
</dbReference>
<dbReference type="HAMAP" id="MF_01849">
    <property type="entry name" value="RNA_methyltr_RlmN"/>
    <property type="match status" value="1"/>
</dbReference>
<dbReference type="InterPro" id="IPR013785">
    <property type="entry name" value="Aldolase_TIM"/>
</dbReference>
<dbReference type="InterPro" id="IPR040072">
    <property type="entry name" value="Methyltransferase_A"/>
</dbReference>
<dbReference type="InterPro" id="IPR048641">
    <property type="entry name" value="RlmN_N"/>
</dbReference>
<dbReference type="InterPro" id="IPR027492">
    <property type="entry name" value="RNA_MTrfase_RlmN"/>
</dbReference>
<dbReference type="InterPro" id="IPR004383">
    <property type="entry name" value="rRNA_lsu_MTrfase_RlmN/Cfr"/>
</dbReference>
<dbReference type="InterPro" id="IPR007197">
    <property type="entry name" value="rSAM"/>
</dbReference>
<dbReference type="NCBIfam" id="TIGR00048">
    <property type="entry name" value="rRNA_mod_RlmN"/>
    <property type="match status" value="1"/>
</dbReference>
<dbReference type="PANTHER" id="PTHR30544">
    <property type="entry name" value="23S RRNA METHYLTRANSFERASE"/>
    <property type="match status" value="1"/>
</dbReference>
<dbReference type="PANTHER" id="PTHR30544:SF5">
    <property type="entry name" value="RADICAL SAM CORE DOMAIN-CONTAINING PROTEIN"/>
    <property type="match status" value="1"/>
</dbReference>
<dbReference type="Pfam" id="PF04055">
    <property type="entry name" value="Radical_SAM"/>
    <property type="match status" value="1"/>
</dbReference>
<dbReference type="Pfam" id="PF21016">
    <property type="entry name" value="RlmN_N"/>
    <property type="match status" value="1"/>
</dbReference>
<dbReference type="PIRSF" id="PIRSF006004">
    <property type="entry name" value="CHP00048"/>
    <property type="match status" value="1"/>
</dbReference>
<dbReference type="SFLD" id="SFLDF00275">
    <property type="entry name" value="adenosine_C2_methyltransferase"/>
    <property type="match status" value="1"/>
</dbReference>
<dbReference type="SFLD" id="SFLDS00029">
    <property type="entry name" value="Radical_SAM"/>
    <property type="match status" value="1"/>
</dbReference>
<dbReference type="SUPFAM" id="SSF102114">
    <property type="entry name" value="Radical SAM enzymes"/>
    <property type="match status" value="1"/>
</dbReference>
<dbReference type="PROSITE" id="PS51918">
    <property type="entry name" value="RADICAL_SAM"/>
    <property type="match status" value="1"/>
</dbReference>
<feature type="chain" id="PRO_0000350232" description="Probable dual-specificity RNA methyltransferase RlmN">
    <location>
        <begin position="1"/>
        <end position="351"/>
    </location>
</feature>
<feature type="domain" description="Radical SAM core" evidence="2">
    <location>
        <begin position="110"/>
        <end position="339"/>
    </location>
</feature>
<feature type="active site" description="Proton acceptor" evidence="1">
    <location>
        <position position="102"/>
    </location>
</feature>
<feature type="active site" description="S-methylcysteine intermediate" evidence="1">
    <location>
        <position position="344"/>
    </location>
</feature>
<feature type="binding site" evidence="1">
    <location>
        <position position="124"/>
    </location>
    <ligand>
        <name>[4Fe-4S] cluster</name>
        <dbReference type="ChEBI" id="CHEBI:49883"/>
        <note>4Fe-4S-S-AdoMet</note>
    </ligand>
</feature>
<feature type="binding site" evidence="1">
    <location>
        <position position="128"/>
    </location>
    <ligand>
        <name>[4Fe-4S] cluster</name>
        <dbReference type="ChEBI" id="CHEBI:49883"/>
        <note>4Fe-4S-S-AdoMet</note>
    </ligand>
</feature>
<feature type="binding site" evidence="1">
    <location>
        <position position="131"/>
    </location>
    <ligand>
        <name>[4Fe-4S] cluster</name>
        <dbReference type="ChEBI" id="CHEBI:49883"/>
        <note>4Fe-4S-S-AdoMet</note>
    </ligand>
</feature>
<feature type="binding site" evidence="1">
    <location>
        <begin position="171"/>
        <end position="172"/>
    </location>
    <ligand>
        <name>S-adenosyl-L-methionine</name>
        <dbReference type="ChEBI" id="CHEBI:59789"/>
    </ligand>
</feature>
<feature type="binding site" evidence="1">
    <location>
        <position position="203"/>
    </location>
    <ligand>
        <name>S-adenosyl-L-methionine</name>
        <dbReference type="ChEBI" id="CHEBI:59789"/>
    </ligand>
</feature>
<feature type="binding site" evidence="1">
    <location>
        <begin position="226"/>
        <end position="228"/>
    </location>
    <ligand>
        <name>S-adenosyl-L-methionine</name>
        <dbReference type="ChEBI" id="CHEBI:59789"/>
    </ligand>
</feature>
<feature type="binding site" evidence="1">
    <location>
        <position position="302"/>
    </location>
    <ligand>
        <name>S-adenosyl-L-methionine</name>
        <dbReference type="ChEBI" id="CHEBI:59789"/>
    </ligand>
</feature>
<feature type="disulfide bond" description="(transient)" evidence="1">
    <location>
        <begin position="117"/>
        <end position="344"/>
    </location>
</feature>
<protein>
    <recommendedName>
        <fullName evidence="1">Probable dual-specificity RNA methyltransferase RlmN</fullName>
        <ecNumber evidence="1">2.1.1.192</ecNumber>
    </recommendedName>
    <alternativeName>
        <fullName evidence="1">23S rRNA (adenine(2503)-C(2))-methyltransferase</fullName>
    </alternativeName>
    <alternativeName>
        <fullName evidence="1">23S rRNA m2A2503 methyltransferase</fullName>
    </alternativeName>
    <alternativeName>
        <fullName evidence="1">Ribosomal RNA large subunit methyltransferase N</fullName>
    </alternativeName>
    <alternativeName>
        <fullName evidence="1">tRNA (adenine(37)-C(2))-methyltransferase</fullName>
    </alternativeName>
    <alternativeName>
        <fullName evidence="1">tRNA m2A37 methyltransferase</fullName>
    </alternativeName>
</protein>
<accession>Q04UG1</accession>
<organism>
    <name type="scientific">Leptospira borgpetersenii serovar Hardjo-bovis (strain JB197)</name>
    <dbReference type="NCBI Taxonomy" id="355277"/>
    <lineage>
        <taxon>Bacteria</taxon>
        <taxon>Pseudomonadati</taxon>
        <taxon>Spirochaetota</taxon>
        <taxon>Spirochaetia</taxon>
        <taxon>Leptospirales</taxon>
        <taxon>Leptospiraceae</taxon>
        <taxon>Leptospira</taxon>
    </lineage>
</organism>